<keyword id="KW-0256">Endoplasmic reticulum</keyword>
<keyword id="KW-0342">GTP-binding</keyword>
<keyword id="KW-0378">Hydrolase</keyword>
<keyword id="KW-0472">Membrane</keyword>
<keyword id="KW-0547">Nucleotide-binding</keyword>
<keyword id="KW-0812">Transmembrane</keyword>
<keyword id="KW-1133">Transmembrane helix</keyword>
<gene>
    <name evidence="1" type="primary">SEY1</name>
    <name type="ORF">CD36_65490</name>
</gene>
<sequence length="790" mass="89983">MELSEGELSHTSSSSSFVPVDQRQLQDAIQIIDEDKHFNTGILDYINKTSPADVGNNYHIISVFGSQSTGKSTLLNRLFNTNFDVMDESNRQQTTKGIWLAYSPVVSTTSGHTTSKSNILVMDVEGTDGRERGEDQDFERKAALFALSTSEILIINIWETQVGLYQGANMGLLKTVFEVNLSLFGKSKLEKHNEHKVLLLIVIRDHVGVTPVESLAKTFTSDLQNMWGSLSKPAELEHLRFADFFDVSFHALNHKVLQPKEFGEGINKLGDRLVVNNELFKPEYHHDVPIDGWTMYAERCWEQIETNKDLDLPTQQILVAQFKCDEIVEGVFQEFLSKYQHHFKEVDVDVDFAELGELFVDLRSDSLEDYDVSASRYNKAVYEQKRAKLRGLINDKLKEVFDVHAKKLCDTLLETFQKDLVALKGKDFAVNVKALSTKLVEQVVDTLSLMSLHGDISSNEITSGLSKEIDATIAKQQVIELNSIVNKSVKKLSGSLSKSIQFELGDPNDETWDNVLQMFKESYDKFGGDFGLGTSTTQNEQAIERFKFKSWCQFYDVTRKLISKEKLLALLQDRFDDKFRYDENGLPKLYLNEQDLEKTFAVAKQYALQVLPILTLAKLADGSEIVPEYDIFDSKLREEFLGAYDDSDDEDDHCFAEVVTEQEKSEVLAKFKKEVDAKYIETKRSIVQHITQIPYYIYLIILVLGWNEFMAIIRNPLFFSLSIVLGATVYVLYYLNLLKPAMLVAQRTMDEVIIMAKTKLREVLIDDHEVTGRQLNKIAGGKENIELDDM</sequence>
<comment type="function">
    <text evidence="1">Cooperates with the reticulon proteins and tubule-shaping DP1 family proteins to generate and maintain the structure of the tubular endoplasmic reticulum network. Has GTPase activity, which is required for its function in ER organization.</text>
</comment>
<comment type="subcellular location">
    <subcellularLocation>
        <location evidence="1">Endoplasmic reticulum membrane</location>
        <topology evidence="1">Multi-pass membrane protein</topology>
    </subcellularLocation>
    <text evidence="1">Enriched in the cortical ER. Concentrated in punctae along the ER tubules.</text>
</comment>
<comment type="similarity">
    <text evidence="2">Belongs to the TRAFAC class dynamin-like GTPase superfamily. GB1/RHD3 GTPase family. RHD3 subfamily.</text>
</comment>
<feature type="chain" id="PRO_0000384977" description="Protein SEY1">
    <location>
        <begin position="1"/>
        <end position="790"/>
    </location>
</feature>
<feature type="topological domain" description="Cytoplasmic" evidence="1">
    <location>
        <begin position="1"/>
        <end position="692"/>
    </location>
</feature>
<feature type="transmembrane region" description="Helical" evidence="1">
    <location>
        <begin position="693"/>
        <end position="713"/>
    </location>
</feature>
<feature type="topological domain" description="Lumenal" evidence="1">
    <location>
        <begin position="714"/>
        <end position="716"/>
    </location>
</feature>
<feature type="transmembrane region" description="Helical" evidence="1">
    <location>
        <begin position="717"/>
        <end position="737"/>
    </location>
</feature>
<feature type="topological domain" description="Cytoplasmic" evidence="1">
    <location>
        <begin position="738"/>
        <end position="790"/>
    </location>
</feature>
<feature type="domain" description="GB1/RHD3-type G" evidence="2">
    <location>
        <begin position="55"/>
        <end position="284"/>
    </location>
</feature>
<feature type="binding site" evidence="1">
    <location>
        <begin position="65"/>
        <end position="72"/>
    </location>
    <ligand>
        <name>GTP</name>
        <dbReference type="ChEBI" id="CHEBI:37565"/>
    </ligand>
</feature>
<accession>B9WJF2</accession>
<proteinExistence type="inferred from homology"/>
<organism>
    <name type="scientific">Candida dubliniensis (strain CD36 / ATCC MYA-646 / CBS 7987 / NCPF 3949 / NRRL Y-17841)</name>
    <name type="common">Yeast</name>
    <dbReference type="NCBI Taxonomy" id="573826"/>
    <lineage>
        <taxon>Eukaryota</taxon>
        <taxon>Fungi</taxon>
        <taxon>Dikarya</taxon>
        <taxon>Ascomycota</taxon>
        <taxon>Saccharomycotina</taxon>
        <taxon>Pichiomycetes</taxon>
        <taxon>Debaryomycetaceae</taxon>
        <taxon>Candida/Lodderomyces clade</taxon>
        <taxon>Candida</taxon>
    </lineage>
</organism>
<reference key="1">
    <citation type="journal article" date="2009" name="Genome Res.">
        <title>Comparative genomics of the fungal pathogens Candida dubliniensis and Candida albicans.</title>
        <authorList>
            <person name="Jackson A.P."/>
            <person name="Gamble J.A."/>
            <person name="Yeomans T."/>
            <person name="Moran G.P."/>
            <person name="Saunders D."/>
            <person name="Harris D."/>
            <person name="Aslett M."/>
            <person name="Barrell J.F."/>
            <person name="Butler G."/>
            <person name="Citiulo F."/>
            <person name="Coleman D.C."/>
            <person name="de Groot P.W.J."/>
            <person name="Goodwin T.J."/>
            <person name="Quail M.A."/>
            <person name="McQuillan J."/>
            <person name="Munro C.A."/>
            <person name="Pain A."/>
            <person name="Poulter R.T."/>
            <person name="Rajandream M.A."/>
            <person name="Renauld H."/>
            <person name="Spiering M.J."/>
            <person name="Tivey A."/>
            <person name="Gow N.A.R."/>
            <person name="Barrell B."/>
            <person name="Sullivan D.J."/>
            <person name="Berriman M."/>
        </authorList>
    </citation>
    <scope>NUCLEOTIDE SEQUENCE [LARGE SCALE GENOMIC DNA]</scope>
    <source>
        <strain>CD36 / ATCC MYA-646 / CBS 7987 / NCPF 3949 / NRRL Y-17841</strain>
    </source>
</reference>
<evidence type="ECO:0000255" key="1">
    <source>
        <dbReference type="HAMAP-Rule" id="MF_03109"/>
    </source>
</evidence>
<evidence type="ECO:0000255" key="2">
    <source>
        <dbReference type="PROSITE-ProRule" id="PRU01052"/>
    </source>
</evidence>
<dbReference type="EC" id="3.6.5.-" evidence="1"/>
<dbReference type="EMBL" id="FM992693">
    <property type="protein sequence ID" value="CAX41375.1"/>
    <property type="molecule type" value="Genomic_DNA"/>
</dbReference>
<dbReference type="SMR" id="B9WJF2"/>
<dbReference type="KEGG" id="cdu:CD36_65490"/>
<dbReference type="CGD" id="CAL0000164118">
    <property type="gene designation" value="Cd36_65490"/>
</dbReference>
<dbReference type="VEuPathDB" id="FungiDB:CD36_65490"/>
<dbReference type="eggNOG" id="KOG2203">
    <property type="taxonomic scope" value="Eukaryota"/>
</dbReference>
<dbReference type="HOGENOM" id="CLU_011270_0_0_1"/>
<dbReference type="OrthoDB" id="1597724at2759"/>
<dbReference type="Proteomes" id="UP000002605">
    <property type="component" value="Chromosome 6"/>
</dbReference>
<dbReference type="GO" id="GO:0005789">
    <property type="term" value="C:endoplasmic reticulum membrane"/>
    <property type="evidence" value="ECO:0007669"/>
    <property type="project" value="UniProtKB-SubCell"/>
</dbReference>
<dbReference type="GO" id="GO:0005525">
    <property type="term" value="F:GTP binding"/>
    <property type="evidence" value="ECO:0007669"/>
    <property type="project" value="UniProtKB-UniRule"/>
</dbReference>
<dbReference type="GO" id="GO:0003924">
    <property type="term" value="F:GTPase activity"/>
    <property type="evidence" value="ECO:0007669"/>
    <property type="project" value="UniProtKB-UniRule"/>
</dbReference>
<dbReference type="GO" id="GO:0016320">
    <property type="term" value="P:endoplasmic reticulum membrane fusion"/>
    <property type="evidence" value="ECO:0007669"/>
    <property type="project" value="TreeGrafter"/>
</dbReference>
<dbReference type="CDD" id="cd01851">
    <property type="entry name" value="GBP"/>
    <property type="match status" value="1"/>
</dbReference>
<dbReference type="FunFam" id="3.40.50.300:FF:000727">
    <property type="entry name" value="Protein SEY1 homolog"/>
    <property type="match status" value="1"/>
</dbReference>
<dbReference type="Gene3D" id="3.40.50.300">
    <property type="entry name" value="P-loop containing nucleotide triphosphate hydrolases"/>
    <property type="match status" value="1"/>
</dbReference>
<dbReference type="HAMAP" id="MF_03109">
    <property type="entry name" value="Sey1"/>
    <property type="match status" value="1"/>
</dbReference>
<dbReference type="InterPro" id="IPR030386">
    <property type="entry name" value="G_GB1_RHD3_dom"/>
</dbReference>
<dbReference type="InterPro" id="IPR027417">
    <property type="entry name" value="P-loop_NTPase"/>
</dbReference>
<dbReference type="InterPro" id="IPR008803">
    <property type="entry name" value="RHD3/Sey1"/>
</dbReference>
<dbReference type="InterPro" id="IPR046758">
    <property type="entry name" value="Sey1/RHD3-like_3HB"/>
</dbReference>
<dbReference type="PANTHER" id="PTHR45923">
    <property type="entry name" value="PROTEIN SEY1"/>
    <property type="match status" value="1"/>
</dbReference>
<dbReference type="PANTHER" id="PTHR45923:SF2">
    <property type="entry name" value="PROTEIN SEY1"/>
    <property type="match status" value="1"/>
</dbReference>
<dbReference type="Pfam" id="PF05879">
    <property type="entry name" value="RHD3_GTPase"/>
    <property type="match status" value="1"/>
</dbReference>
<dbReference type="Pfam" id="PF20428">
    <property type="entry name" value="Sey1_3HB"/>
    <property type="match status" value="1"/>
</dbReference>
<dbReference type="SUPFAM" id="SSF52540">
    <property type="entry name" value="P-loop containing nucleoside triphosphate hydrolases"/>
    <property type="match status" value="1"/>
</dbReference>
<dbReference type="PROSITE" id="PS51715">
    <property type="entry name" value="G_GB1_RHD3"/>
    <property type="match status" value="1"/>
</dbReference>
<name>SEY1_CANDC</name>
<protein>
    <recommendedName>
        <fullName evidence="1">Protein SEY1</fullName>
        <ecNumber evidence="1">3.6.5.-</ecNumber>
    </recommendedName>
</protein>